<feature type="chain" id="PRO_1000198544" description="tRNA/tmRNA (uracil-C(5))-methyltransferase">
    <location>
        <begin position="1"/>
        <end position="366"/>
    </location>
</feature>
<feature type="active site" description="Nucleophile" evidence="1">
    <location>
        <position position="324"/>
    </location>
</feature>
<feature type="active site" description="Proton acceptor" evidence="1">
    <location>
        <position position="358"/>
    </location>
</feature>
<feature type="binding site" evidence="1">
    <location>
        <position position="190"/>
    </location>
    <ligand>
        <name>S-adenosyl-L-methionine</name>
        <dbReference type="ChEBI" id="CHEBI:59789"/>
    </ligand>
</feature>
<feature type="binding site" evidence="1">
    <location>
        <position position="218"/>
    </location>
    <ligand>
        <name>S-adenosyl-L-methionine</name>
        <dbReference type="ChEBI" id="CHEBI:59789"/>
    </ligand>
</feature>
<feature type="binding site" evidence="1">
    <location>
        <position position="223"/>
    </location>
    <ligand>
        <name>S-adenosyl-L-methionine</name>
        <dbReference type="ChEBI" id="CHEBI:59789"/>
    </ligand>
</feature>
<feature type="binding site" evidence="1">
    <location>
        <position position="239"/>
    </location>
    <ligand>
        <name>S-adenosyl-L-methionine</name>
        <dbReference type="ChEBI" id="CHEBI:59789"/>
    </ligand>
</feature>
<feature type="binding site" evidence="1">
    <location>
        <position position="299"/>
    </location>
    <ligand>
        <name>S-adenosyl-L-methionine</name>
        <dbReference type="ChEBI" id="CHEBI:59789"/>
    </ligand>
</feature>
<evidence type="ECO:0000255" key="1">
    <source>
        <dbReference type="HAMAP-Rule" id="MF_01011"/>
    </source>
</evidence>
<keyword id="KW-0489">Methyltransferase</keyword>
<keyword id="KW-0949">S-adenosyl-L-methionine</keyword>
<keyword id="KW-0808">Transferase</keyword>
<keyword id="KW-0819">tRNA processing</keyword>
<gene>
    <name evidence="1" type="primary">trmA</name>
    <name type="ordered locus">ECIAI39_3024</name>
</gene>
<organism>
    <name type="scientific">Escherichia coli O7:K1 (strain IAI39 / ExPEC)</name>
    <dbReference type="NCBI Taxonomy" id="585057"/>
    <lineage>
        <taxon>Bacteria</taxon>
        <taxon>Pseudomonadati</taxon>
        <taxon>Pseudomonadota</taxon>
        <taxon>Gammaproteobacteria</taxon>
        <taxon>Enterobacterales</taxon>
        <taxon>Enterobacteriaceae</taxon>
        <taxon>Escherichia</taxon>
    </lineage>
</organism>
<sequence>MTPEHLPTEQYEAQLAEKVVRLQSMMAPFSNLVPEVFRSPVSHYRMRAEFRIWHDGDDLYHIIFDQQTKSRIRVDSFPAASELINQLMSAMIAGVRNNPVLRHKLFQIDYLTTLSNQAVVSLLYHKKLNDEWRQQAEALRDALRAQNLNVHLIGRATKTKIELDQDYIDERLPVAGKEMIYRQVENSFTQPNAAMNIQMLEWALDVTKGSKGDLLELYCGNGNFSLALARNFDRVLATEIAKPSVAAAQYNIAANHIDNVQIIRMAAEEFTQAMNGVREFHRLQGIDLKSYQCETIFVDPPRSGLDSETEKMVQAYPRILYISCNPETLCKNLETLSQTHKVERLALFDQFPYTHHMECGVLLTAK</sequence>
<comment type="function">
    <text evidence="1">Dual-specificity methyltransferase that catalyzes the formation of 5-methyluridine at position 54 (m5U54) in all tRNAs, and that of position 341 (m5U341) in tmRNA (transfer-mRNA).</text>
</comment>
<comment type="catalytic activity">
    <reaction evidence="1">
        <text>uridine(54) in tRNA + S-adenosyl-L-methionine = 5-methyluridine(54) in tRNA + S-adenosyl-L-homocysteine + H(+)</text>
        <dbReference type="Rhea" id="RHEA:42712"/>
        <dbReference type="Rhea" id="RHEA-COMP:10167"/>
        <dbReference type="Rhea" id="RHEA-COMP:10193"/>
        <dbReference type="ChEBI" id="CHEBI:15378"/>
        <dbReference type="ChEBI" id="CHEBI:57856"/>
        <dbReference type="ChEBI" id="CHEBI:59789"/>
        <dbReference type="ChEBI" id="CHEBI:65315"/>
        <dbReference type="ChEBI" id="CHEBI:74447"/>
        <dbReference type="EC" id="2.1.1.35"/>
    </reaction>
</comment>
<comment type="catalytic activity">
    <reaction evidence="1">
        <text>uridine(341) in tmRNA + S-adenosyl-L-methionine = 5-methyluridine(341) in tmRNA + S-adenosyl-L-homocysteine + H(+)</text>
        <dbReference type="Rhea" id="RHEA:43612"/>
        <dbReference type="Rhea" id="RHEA-COMP:10630"/>
        <dbReference type="Rhea" id="RHEA-COMP:10631"/>
        <dbReference type="ChEBI" id="CHEBI:15378"/>
        <dbReference type="ChEBI" id="CHEBI:57856"/>
        <dbReference type="ChEBI" id="CHEBI:59789"/>
        <dbReference type="ChEBI" id="CHEBI:65315"/>
        <dbReference type="ChEBI" id="CHEBI:74447"/>
    </reaction>
</comment>
<comment type="similarity">
    <text evidence="1">Belongs to the class I-like SAM-binding methyltransferase superfamily. RNA M5U methyltransferase family. TrmA subfamily.</text>
</comment>
<dbReference type="EC" id="2.1.1.-" evidence="1"/>
<dbReference type="EC" id="2.1.1.35" evidence="1"/>
<dbReference type="EMBL" id="CU928164">
    <property type="protein sequence ID" value="CAR19143.1"/>
    <property type="molecule type" value="Genomic_DNA"/>
</dbReference>
<dbReference type="RefSeq" id="WP_000187040.1">
    <property type="nucleotide sequence ID" value="NC_011750.1"/>
</dbReference>
<dbReference type="RefSeq" id="YP_002408954.1">
    <property type="nucleotide sequence ID" value="NC_011750.1"/>
</dbReference>
<dbReference type="SMR" id="B7NU35"/>
<dbReference type="STRING" id="585057.ECIAI39_3024"/>
<dbReference type="KEGG" id="ect:ECIAI39_3024"/>
<dbReference type="PATRIC" id="fig|585057.6.peg.3136"/>
<dbReference type="HOGENOM" id="CLU_043022_0_0_6"/>
<dbReference type="Proteomes" id="UP000000749">
    <property type="component" value="Chromosome"/>
</dbReference>
<dbReference type="GO" id="GO:0005829">
    <property type="term" value="C:cytosol"/>
    <property type="evidence" value="ECO:0007669"/>
    <property type="project" value="TreeGrafter"/>
</dbReference>
<dbReference type="GO" id="GO:0019843">
    <property type="term" value="F:rRNA binding"/>
    <property type="evidence" value="ECO:0007669"/>
    <property type="project" value="TreeGrafter"/>
</dbReference>
<dbReference type="GO" id="GO:0030697">
    <property type="term" value="F:tRNA (uracil(54)-C5)-methyltransferase activity, S-adenosyl methionine-dependent"/>
    <property type="evidence" value="ECO:0007669"/>
    <property type="project" value="UniProtKB-UniRule"/>
</dbReference>
<dbReference type="GO" id="GO:0000049">
    <property type="term" value="F:tRNA binding"/>
    <property type="evidence" value="ECO:0007669"/>
    <property type="project" value="TreeGrafter"/>
</dbReference>
<dbReference type="GO" id="GO:0030488">
    <property type="term" value="P:tRNA methylation"/>
    <property type="evidence" value="ECO:0007669"/>
    <property type="project" value="UniProtKB-UniRule"/>
</dbReference>
<dbReference type="CDD" id="cd02440">
    <property type="entry name" value="AdoMet_MTases"/>
    <property type="match status" value="1"/>
</dbReference>
<dbReference type="FunFam" id="2.40.50.1070:FF:000001">
    <property type="entry name" value="tRNA/tmRNA (uracil-C(5))-methyltransferase"/>
    <property type="match status" value="1"/>
</dbReference>
<dbReference type="FunFam" id="3.40.50.150:FF:000012">
    <property type="entry name" value="tRNA/tmRNA (uracil-C(5))-methyltransferase"/>
    <property type="match status" value="1"/>
</dbReference>
<dbReference type="Gene3D" id="2.40.50.1070">
    <property type="match status" value="1"/>
</dbReference>
<dbReference type="Gene3D" id="3.40.50.150">
    <property type="entry name" value="Vaccinia Virus protein VP39"/>
    <property type="match status" value="1"/>
</dbReference>
<dbReference type="HAMAP" id="MF_01011">
    <property type="entry name" value="RNA_methyltr_TrmA"/>
    <property type="match status" value="1"/>
</dbReference>
<dbReference type="InterPro" id="IPR030390">
    <property type="entry name" value="MeTrfase_TrmA_AS"/>
</dbReference>
<dbReference type="InterPro" id="IPR030391">
    <property type="entry name" value="MeTrfase_TrmA_CS"/>
</dbReference>
<dbReference type="InterPro" id="IPR029063">
    <property type="entry name" value="SAM-dependent_MTases_sf"/>
</dbReference>
<dbReference type="InterPro" id="IPR011869">
    <property type="entry name" value="TrmA_MeTrfase"/>
</dbReference>
<dbReference type="InterPro" id="IPR010280">
    <property type="entry name" value="U5_MeTrfase_fam"/>
</dbReference>
<dbReference type="NCBIfam" id="TIGR02143">
    <property type="entry name" value="trmA_only"/>
    <property type="match status" value="1"/>
</dbReference>
<dbReference type="PANTHER" id="PTHR47790">
    <property type="entry name" value="TRNA/TMRNA (URACIL-C(5))-METHYLTRANSFERASE"/>
    <property type="match status" value="1"/>
</dbReference>
<dbReference type="PANTHER" id="PTHR47790:SF2">
    <property type="entry name" value="TRNA_TMRNA (URACIL-C(5))-METHYLTRANSFERASE"/>
    <property type="match status" value="1"/>
</dbReference>
<dbReference type="Pfam" id="PF05958">
    <property type="entry name" value="tRNA_U5-meth_tr"/>
    <property type="match status" value="1"/>
</dbReference>
<dbReference type="SUPFAM" id="SSF53335">
    <property type="entry name" value="S-adenosyl-L-methionine-dependent methyltransferases"/>
    <property type="match status" value="1"/>
</dbReference>
<dbReference type="PROSITE" id="PS51687">
    <property type="entry name" value="SAM_MT_RNA_M5U"/>
    <property type="match status" value="1"/>
</dbReference>
<dbReference type="PROSITE" id="PS01230">
    <property type="entry name" value="TRMA_1"/>
    <property type="match status" value="1"/>
</dbReference>
<dbReference type="PROSITE" id="PS01231">
    <property type="entry name" value="TRMA_2"/>
    <property type="match status" value="1"/>
</dbReference>
<reference key="1">
    <citation type="journal article" date="2009" name="PLoS Genet.">
        <title>Organised genome dynamics in the Escherichia coli species results in highly diverse adaptive paths.</title>
        <authorList>
            <person name="Touchon M."/>
            <person name="Hoede C."/>
            <person name="Tenaillon O."/>
            <person name="Barbe V."/>
            <person name="Baeriswyl S."/>
            <person name="Bidet P."/>
            <person name="Bingen E."/>
            <person name="Bonacorsi S."/>
            <person name="Bouchier C."/>
            <person name="Bouvet O."/>
            <person name="Calteau A."/>
            <person name="Chiapello H."/>
            <person name="Clermont O."/>
            <person name="Cruveiller S."/>
            <person name="Danchin A."/>
            <person name="Diard M."/>
            <person name="Dossat C."/>
            <person name="Karoui M.E."/>
            <person name="Frapy E."/>
            <person name="Garry L."/>
            <person name="Ghigo J.M."/>
            <person name="Gilles A.M."/>
            <person name="Johnson J."/>
            <person name="Le Bouguenec C."/>
            <person name="Lescat M."/>
            <person name="Mangenot S."/>
            <person name="Martinez-Jehanne V."/>
            <person name="Matic I."/>
            <person name="Nassif X."/>
            <person name="Oztas S."/>
            <person name="Petit M.A."/>
            <person name="Pichon C."/>
            <person name="Rouy Z."/>
            <person name="Ruf C.S."/>
            <person name="Schneider D."/>
            <person name="Tourret J."/>
            <person name="Vacherie B."/>
            <person name="Vallenet D."/>
            <person name="Medigue C."/>
            <person name="Rocha E.P.C."/>
            <person name="Denamur E."/>
        </authorList>
    </citation>
    <scope>NUCLEOTIDE SEQUENCE [LARGE SCALE GENOMIC DNA]</scope>
    <source>
        <strain>IAI39 / ExPEC</strain>
    </source>
</reference>
<accession>B7NU35</accession>
<protein>
    <recommendedName>
        <fullName evidence="1">tRNA/tmRNA (uracil-C(5))-methyltransferase</fullName>
        <ecNumber evidence="1">2.1.1.-</ecNumber>
        <ecNumber evidence="1">2.1.1.35</ecNumber>
    </recommendedName>
    <alternativeName>
        <fullName evidence="1">tRNA (uracil(54)-C(5))-methyltransferase</fullName>
    </alternativeName>
    <alternativeName>
        <fullName evidence="1">tRNA(m5U54)-methyltransferase</fullName>
        <shortName evidence="1">RUMT</shortName>
    </alternativeName>
    <alternativeName>
        <fullName evidence="1">tmRNA (uracil(341)-C(5))-methyltransferase</fullName>
    </alternativeName>
</protein>
<name>TRMA_ECO7I</name>
<proteinExistence type="inferred from homology"/>